<evidence type="ECO:0000250" key="1">
    <source>
        <dbReference type="UniProtKB" id="Q8QZY3"/>
    </source>
</evidence>
<evidence type="ECO:0000256" key="2">
    <source>
        <dbReference type="SAM" id="MobiDB-lite"/>
    </source>
</evidence>
<accession>Q6IMK0</accession>
<keyword id="KW-0156">Chromatin regulator</keyword>
<keyword id="KW-0963">Cytoplasm</keyword>
<keyword id="KW-0217">Developmental protein</keyword>
<keyword id="KW-0539">Nucleus</keyword>
<keyword id="KW-1185">Reference proteome</keyword>
<organism>
    <name type="scientific">Rattus norvegicus</name>
    <name type="common">Rat</name>
    <dbReference type="NCBI Taxonomy" id="10116"/>
    <lineage>
        <taxon>Eukaryota</taxon>
        <taxon>Metazoa</taxon>
        <taxon>Chordata</taxon>
        <taxon>Craniata</taxon>
        <taxon>Vertebrata</taxon>
        <taxon>Euteleostomi</taxon>
        <taxon>Mammalia</taxon>
        <taxon>Eutheria</taxon>
        <taxon>Euarchontoglires</taxon>
        <taxon>Glires</taxon>
        <taxon>Rodentia</taxon>
        <taxon>Myomorpha</taxon>
        <taxon>Muroidea</taxon>
        <taxon>Muridae</taxon>
        <taxon>Murinae</taxon>
        <taxon>Rattus</taxon>
    </lineage>
</organism>
<protein>
    <recommendedName>
        <fullName>Developmental pluripotency-associated protein 3</fullName>
    </recommendedName>
</protein>
<proteinExistence type="evidence at transcript level"/>
<comment type="function">
    <text evidence="1">Primordial germ cell (PGCs)-specific protein involved in epigenetic chromatin reprogramming in the zygote following fertilization. In zygotes, DNA demethylation occurs selectively in the paternal pronucleus before the first cell division, while the adjacent maternal pronucleus and certain paternally-imprinted loci are protected from this process. Participates in protection of DNA methylation in the maternal pronucleus by preventing conversion of 5mC to 5hmC: specifically recognizes and binds histone H3 dimethylated at 'Lys-9' (H3K9me2) on maternal genome, and protects maternal genome from TET3-mediated conversion to 5hmC and subsequent DNA demethylation. Does not bind paternal chromatin, which is mainly packed into protamine and does not contain much H3K9me2 mark. Also protects imprinted loci that are marked with H3K9me2 in mature sperm from DNA demethylation in early embryogenesis. May be important for the totipotent/pluripotent states continuing through preimplantation development. Also involved in chromatin condensation in oocytogenesis.</text>
</comment>
<comment type="subcellular location">
    <subcellularLocation>
        <location evidence="1">Nucleus</location>
    </subcellularLocation>
    <subcellularLocation>
        <location evidence="1">Cytoplasm</location>
    </subcellularLocation>
    <text evidence="1">Mainly localizes in the female pronucleus, localization to the male pronucleus in much weaker.</text>
</comment>
<comment type="domain">
    <text evidence="1">Mediates binding to H3K9me2 via N-terminal region, while ability to exclude TET3 from the maternal pronucleus requires the C-terminal part.</text>
</comment>
<reference key="1">
    <citation type="journal article" date="2003" name="Curr. Biol.">
        <title>Stella is a maternal effect gene required for normal early development in mice.</title>
        <authorList>
            <person name="Payer B."/>
            <person name="Saitou M."/>
            <person name="Barton S.C."/>
            <person name="Thresher R."/>
            <person name="Dixon J.P."/>
            <person name="Zahn D."/>
            <person name="Colledge W.H."/>
            <person name="Carlton M.B."/>
            <person name="Nakano T."/>
            <person name="Surani M.A."/>
        </authorList>
    </citation>
    <scope>NUCLEOTIDE SEQUENCE [MRNA]</scope>
</reference>
<dbReference type="EMBL" id="BK001414">
    <property type="protein sequence ID" value="DAA01452.1"/>
    <property type="molecule type" value="mRNA"/>
</dbReference>
<dbReference type="RefSeq" id="NP_001041329.1">
    <property type="nucleotide sequence ID" value="NM_001047864.1"/>
</dbReference>
<dbReference type="SMR" id="Q6IMK0"/>
<dbReference type="FunCoup" id="Q6IMK0">
    <property type="interactions" value="10"/>
</dbReference>
<dbReference type="STRING" id="10116.ENSRNOP00000036033"/>
<dbReference type="PhosphoSitePlus" id="Q6IMK0"/>
<dbReference type="PaxDb" id="10116-ENSRNOP00000036033"/>
<dbReference type="Ensembl" id="ENSRNOT00000031353.6">
    <property type="protein sequence ID" value="ENSRNOP00000036033.4"/>
    <property type="gene ID" value="ENSRNOG00000022950.6"/>
</dbReference>
<dbReference type="Ensembl" id="ENSRNOT00000049192.4">
    <property type="protein sequence ID" value="ENSRNOP00000090420.1"/>
    <property type="gene ID" value="ENSRNOG00000031344.4"/>
</dbReference>
<dbReference type="GeneID" id="297576"/>
<dbReference type="KEGG" id="rno:297576"/>
<dbReference type="UCSC" id="RGD:1310932">
    <property type="organism name" value="rat"/>
</dbReference>
<dbReference type="AGR" id="RGD:1310932"/>
<dbReference type="AGR" id="RGD:402053039"/>
<dbReference type="CTD" id="359787"/>
<dbReference type="RGD" id="1310932">
    <property type="gene designation" value="Dppa3"/>
</dbReference>
<dbReference type="GeneTree" id="ENSGT00800000124303"/>
<dbReference type="HOGENOM" id="CLU_107188_1_0_1"/>
<dbReference type="InParanoid" id="Q6IMK0"/>
<dbReference type="OrthoDB" id="9529981at2759"/>
<dbReference type="PhylomeDB" id="Q6IMK0"/>
<dbReference type="TreeFam" id="TF338511"/>
<dbReference type="PRO" id="PR:Q6IMK0"/>
<dbReference type="Proteomes" id="UP000002494">
    <property type="component" value="Chromosome 4"/>
</dbReference>
<dbReference type="Proteomes" id="UP000002494">
    <property type="component" value="Chromosome 5"/>
</dbReference>
<dbReference type="Bgee" id="ENSRNOG00000022950">
    <property type="expression patterns" value="Expressed in ovary and 1 other cell type or tissue"/>
</dbReference>
<dbReference type="GO" id="GO:0000785">
    <property type="term" value="C:chromatin"/>
    <property type="evidence" value="ECO:0000266"/>
    <property type="project" value="RGD"/>
</dbReference>
<dbReference type="GO" id="GO:0005737">
    <property type="term" value="C:cytoplasm"/>
    <property type="evidence" value="ECO:0000250"/>
    <property type="project" value="UniProtKB"/>
</dbReference>
<dbReference type="GO" id="GO:0001939">
    <property type="term" value="C:female pronucleus"/>
    <property type="evidence" value="ECO:0000250"/>
    <property type="project" value="UniProtKB"/>
</dbReference>
<dbReference type="GO" id="GO:0001940">
    <property type="term" value="C:male pronucleus"/>
    <property type="evidence" value="ECO:0000266"/>
    <property type="project" value="RGD"/>
</dbReference>
<dbReference type="GO" id="GO:0005634">
    <property type="term" value="C:nucleus"/>
    <property type="evidence" value="ECO:0000250"/>
    <property type="project" value="UniProtKB"/>
</dbReference>
<dbReference type="GO" id="GO:0062072">
    <property type="term" value="F:histone H3K9me2/3 reader activity"/>
    <property type="evidence" value="ECO:0000250"/>
    <property type="project" value="UniProtKB"/>
</dbReference>
<dbReference type="GO" id="GO:0035064">
    <property type="term" value="F:methylated histone binding"/>
    <property type="evidence" value="ECO:0000266"/>
    <property type="project" value="RGD"/>
</dbReference>
<dbReference type="GO" id="GO:0040016">
    <property type="term" value="P:embryonic cleavage"/>
    <property type="evidence" value="ECO:0000266"/>
    <property type="project" value="RGD"/>
</dbReference>
<dbReference type="GO" id="GO:0044726">
    <property type="term" value="P:epigenetic programing of female pronucleus"/>
    <property type="evidence" value="ECO:0000250"/>
    <property type="project" value="UniProtKB"/>
</dbReference>
<dbReference type="InterPro" id="IPR029096">
    <property type="entry name" value="Dppa3"/>
</dbReference>
<dbReference type="PANTHER" id="PTHR31577:SF2">
    <property type="entry name" value="DEVELOPMENTAL PLURIPOTENCY-ASSOCIATED PROTEIN 3"/>
    <property type="match status" value="1"/>
</dbReference>
<dbReference type="PANTHER" id="PTHR31577">
    <property type="entry name" value="DEVELOPMENTAL PLURIPOTENCY-ASSOCIATED PROTEIN 3-RELATED"/>
    <property type="match status" value="1"/>
</dbReference>
<dbReference type="Pfam" id="PF15549">
    <property type="entry name" value="PGC7_Stella"/>
    <property type="match status" value="1"/>
</dbReference>
<feature type="chain" id="PRO_0000239267" description="Developmental pluripotency-associated protein 3">
    <location>
        <begin position="1"/>
        <end position="158"/>
    </location>
</feature>
<feature type="region of interest" description="Disordered" evidence="2">
    <location>
        <begin position="1"/>
        <end position="38"/>
    </location>
</feature>
<feature type="region of interest" description="Disordered" evidence="2">
    <location>
        <begin position="54"/>
        <end position="78"/>
    </location>
</feature>
<feature type="compositionally biased region" description="Acidic residues" evidence="2">
    <location>
        <begin position="26"/>
        <end position="35"/>
    </location>
</feature>
<feature type="compositionally biased region" description="Basic residues" evidence="2">
    <location>
        <begin position="58"/>
        <end position="68"/>
    </location>
</feature>
<gene>
    <name type="primary">Dppa3</name>
    <name type="synonym">Stella</name>
</gene>
<sequence>MDEPSEKVDPVVNPETQMYDGSQREDEGDSPDDSEILQPETLVKVMKKLTLNPSAKPTKYHRRQRVRLQVKSQPVENRSERIMREVQSAFPRRRVRTLLSVLKDPIARMRRFVRIEQRQRQLEGNERRDEPFRCLCTFCHYQRWDPSENAKIGQNQKN</sequence>
<name>DPPA3_RAT</name>